<organism>
    <name type="scientific">Agrobacterium fabrum (strain C58 / ATCC 33970)</name>
    <name type="common">Agrobacterium tumefaciens (strain C58)</name>
    <dbReference type="NCBI Taxonomy" id="176299"/>
    <lineage>
        <taxon>Bacteria</taxon>
        <taxon>Pseudomonadati</taxon>
        <taxon>Pseudomonadota</taxon>
        <taxon>Alphaproteobacteria</taxon>
        <taxon>Hyphomicrobiales</taxon>
        <taxon>Rhizobiaceae</taxon>
        <taxon>Rhizobium/Agrobacterium group</taxon>
        <taxon>Agrobacterium</taxon>
        <taxon>Agrobacterium tumefaciens complex</taxon>
    </lineage>
</organism>
<comment type="function">
    <text>Probable catalytic subunit of a protein translocase for flagellum-specific export, or a proton translocase involved in local circuits at the flagellum.</text>
</comment>
<comment type="catalytic activity">
    <reaction evidence="2">
        <text>ATP + H2O + 4 H(+)(in) = ADP + phosphate + 5 H(+)(out)</text>
        <dbReference type="Rhea" id="RHEA:57720"/>
        <dbReference type="ChEBI" id="CHEBI:15377"/>
        <dbReference type="ChEBI" id="CHEBI:15378"/>
        <dbReference type="ChEBI" id="CHEBI:30616"/>
        <dbReference type="ChEBI" id="CHEBI:43474"/>
        <dbReference type="ChEBI" id="CHEBI:456216"/>
        <dbReference type="EC" id="7.1.2.2"/>
    </reaction>
</comment>
<comment type="subcellular location">
    <subcellularLocation>
        <location evidence="3">Cytoplasm</location>
    </subcellularLocation>
</comment>
<comment type="similarity">
    <text evidence="3">Belongs to the ATPase alpha/beta chains family.</text>
</comment>
<sequence>MTMPESMLSESKLSGWAISPKLAQLASLAGHYADPEFSVAHGGHVRTIAAGHYTVSGLSRHVRLGEFVAHRSATGIHLGEVVRVEPDICYVCPIEPGEPIGIHDTVIRKGAFRVSPDESWCGRTINALGEPIDGQGPLASGIVRRSISNNAPPSMTRKRVETPFKTGVRAIDIFSPLCLGQRLGIFAGSGVGKSTLLSMLAKADAFDKVVIALVGERGREVREFIEDTMGDNMSKSVAVVATSDESPMLRKMAPLSAVTIAEHFRDQGDNVLLIIDSVTRFAHAIREVAVASGEPPVARGYPASVFTELPRLLERAGPGAEGTGTITAIVSILVDGDNHNDPIADSTRGILDGHIVLDRSLAEEGRYPPINPLASISRLAKKAWTPDQEKLVSRLKALVHRFEETRDLRLIGGYRPGTDPDLDMAVKQVPIIYETLKQLPDEPAAQDAYADLATALRGGAQNGQPQVNPRMRG</sequence>
<gene>
    <name type="primary">fliI</name>
    <name type="ordered locus">Atu0557</name>
    <name type="ORF">AGR_C_980</name>
</gene>
<name>FLII_AGRFC</name>
<accession>O34171</accession>
<evidence type="ECO:0000255" key="1"/>
<evidence type="ECO:0000255" key="2">
    <source>
        <dbReference type="PROSITE-ProRule" id="PRU10106"/>
    </source>
</evidence>
<evidence type="ECO:0000305" key="3"/>
<proteinExistence type="inferred from homology"/>
<protein>
    <recommendedName>
        <fullName>Flagellum-specific ATP synthase</fullName>
        <ecNumber>7.1.2.2</ecNumber>
    </recommendedName>
</protein>
<keyword id="KW-0066">ATP synthesis</keyword>
<keyword id="KW-0067">ATP-binding</keyword>
<keyword id="KW-1005">Bacterial flagellum biogenesis</keyword>
<keyword id="KW-1006">Bacterial flagellum protein export</keyword>
<keyword id="KW-0963">Cytoplasm</keyword>
<keyword id="KW-0375">Hydrogen ion transport</keyword>
<keyword id="KW-0406">Ion transport</keyword>
<keyword id="KW-0547">Nucleotide-binding</keyword>
<keyword id="KW-0653">Protein transport</keyword>
<keyword id="KW-1185">Reference proteome</keyword>
<keyword id="KW-1278">Translocase</keyword>
<keyword id="KW-0813">Transport</keyword>
<feature type="chain" id="PRO_0000144687" description="Flagellum-specific ATP synthase">
    <location>
        <begin position="1"/>
        <end position="473"/>
    </location>
</feature>
<feature type="binding site" evidence="1">
    <location>
        <begin position="187"/>
        <end position="194"/>
    </location>
    <ligand>
        <name>ATP</name>
        <dbReference type="ChEBI" id="CHEBI:30616"/>
    </ligand>
</feature>
<dbReference type="EC" id="7.1.2.2"/>
<dbReference type="EMBL" id="U95165">
    <property type="protein sequence ID" value="AAB71785.1"/>
    <property type="molecule type" value="Genomic_DNA"/>
</dbReference>
<dbReference type="EMBL" id="AE007869">
    <property type="protein sequence ID" value="AAK86369.1"/>
    <property type="molecule type" value="Genomic_DNA"/>
</dbReference>
<dbReference type="PIR" id="AH2644">
    <property type="entry name" value="AH2644"/>
</dbReference>
<dbReference type="PIR" id="H97426">
    <property type="entry name" value="H97426"/>
</dbReference>
<dbReference type="RefSeq" id="NP_353584.1">
    <property type="nucleotide sequence ID" value="NC_003062.2"/>
</dbReference>
<dbReference type="RefSeq" id="WP_010970975.1">
    <property type="nucleotide sequence ID" value="NC_003062.2"/>
</dbReference>
<dbReference type="SMR" id="O34171"/>
<dbReference type="STRING" id="176299.Atu0557"/>
<dbReference type="EnsemblBacteria" id="AAK86369">
    <property type="protein sequence ID" value="AAK86369"/>
    <property type="gene ID" value="Atu0557"/>
</dbReference>
<dbReference type="GeneID" id="1132595"/>
<dbReference type="KEGG" id="atu:Atu0557"/>
<dbReference type="PATRIC" id="fig|176299.10.peg.553"/>
<dbReference type="eggNOG" id="COG1157">
    <property type="taxonomic scope" value="Bacteria"/>
</dbReference>
<dbReference type="HOGENOM" id="CLU_022398_5_1_5"/>
<dbReference type="OrthoDB" id="9801639at2"/>
<dbReference type="PhylomeDB" id="O34171"/>
<dbReference type="BioCyc" id="AGRO:ATU0557-MONOMER"/>
<dbReference type="Proteomes" id="UP000000813">
    <property type="component" value="Chromosome circular"/>
</dbReference>
<dbReference type="GO" id="GO:0009288">
    <property type="term" value="C:bacterial-type flagellum"/>
    <property type="evidence" value="ECO:0000315"/>
    <property type="project" value="PAMGO_GAT"/>
</dbReference>
<dbReference type="GO" id="GO:0005737">
    <property type="term" value="C:cytoplasm"/>
    <property type="evidence" value="ECO:0007669"/>
    <property type="project" value="UniProtKB-SubCell"/>
</dbReference>
<dbReference type="GO" id="GO:0030257">
    <property type="term" value="C:type III protein secretion system complex"/>
    <property type="evidence" value="ECO:0007669"/>
    <property type="project" value="InterPro"/>
</dbReference>
<dbReference type="GO" id="GO:0005524">
    <property type="term" value="F:ATP binding"/>
    <property type="evidence" value="ECO:0007669"/>
    <property type="project" value="UniProtKB-KW"/>
</dbReference>
<dbReference type="GO" id="GO:0016887">
    <property type="term" value="F:ATP hydrolysis activity"/>
    <property type="evidence" value="ECO:0000250"/>
    <property type="project" value="PAMGO_GAT"/>
</dbReference>
<dbReference type="GO" id="GO:0046933">
    <property type="term" value="F:proton-transporting ATP synthase activity, rotational mechanism"/>
    <property type="evidence" value="ECO:0007669"/>
    <property type="project" value="TreeGrafter"/>
</dbReference>
<dbReference type="GO" id="GO:0044781">
    <property type="term" value="P:bacterial-type flagellum organization"/>
    <property type="evidence" value="ECO:0007669"/>
    <property type="project" value="UniProtKB-KW"/>
</dbReference>
<dbReference type="GO" id="GO:0030254">
    <property type="term" value="P:protein secretion by the type III secretion system"/>
    <property type="evidence" value="ECO:0007669"/>
    <property type="project" value="InterPro"/>
</dbReference>
<dbReference type="CDD" id="cd01136">
    <property type="entry name" value="ATPase_flagellum-secretory_path_III"/>
    <property type="match status" value="1"/>
</dbReference>
<dbReference type="FunFam" id="3.40.50.12240:FF:000002">
    <property type="entry name" value="Flagellum-specific ATP synthase FliI"/>
    <property type="match status" value="1"/>
</dbReference>
<dbReference type="Gene3D" id="3.40.50.12240">
    <property type="match status" value="1"/>
</dbReference>
<dbReference type="InterPro" id="IPR003593">
    <property type="entry name" value="AAA+_ATPase"/>
</dbReference>
<dbReference type="InterPro" id="IPR020003">
    <property type="entry name" value="ATPase_a/bsu_AS"/>
</dbReference>
<dbReference type="InterPro" id="IPR050053">
    <property type="entry name" value="ATPase_alpha/beta_chains"/>
</dbReference>
<dbReference type="InterPro" id="IPR000194">
    <property type="entry name" value="ATPase_F1/V1/A1_a/bsu_nucl-bd"/>
</dbReference>
<dbReference type="InterPro" id="IPR005714">
    <property type="entry name" value="ATPase_T3SS_FliI/YscN"/>
</dbReference>
<dbReference type="InterPro" id="IPR022426">
    <property type="entry name" value="FliI_clade3"/>
</dbReference>
<dbReference type="InterPro" id="IPR027417">
    <property type="entry name" value="P-loop_NTPase"/>
</dbReference>
<dbReference type="InterPro" id="IPR040627">
    <property type="entry name" value="T3SS_ATPase_C"/>
</dbReference>
<dbReference type="NCBIfam" id="TIGR03498">
    <property type="entry name" value="FliI_clade3"/>
    <property type="match status" value="1"/>
</dbReference>
<dbReference type="NCBIfam" id="TIGR01026">
    <property type="entry name" value="fliI_yscN"/>
    <property type="match status" value="1"/>
</dbReference>
<dbReference type="PANTHER" id="PTHR15184">
    <property type="entry name" value="ATP SYNTHASE"/>
    <property type="match status" value="1"/>
</dbReference>
<dbReference type="PANTHER" id="PTHR15184:SF9">
    <property type="entry name" value="SPI-1 TYPE 3 SECRETION SYSTEM ATPASE"/>
    <property type="match status" value="1"/>
</dbReference>
<dbReference type="Pfam" id="PF00006">
    <property type="entry name" value="ATP-synt_ab"/>
    <property type="match status" value="1"/>
</dbReference>
<dbReference type="Pfam" id="PF18269">
    <property type="entry name" value="T3SS_ATPase_C"/>
    <property type="match status" value="1"/>
</dbReference>
<dbReference type="SMART" id="SM00382">
    <property type="entry name" value="AAA"/>
    <property type="match status" value="1"/>
</dbReference>
<dbReference type="SUPFAM" id="SSF52540">
    <property type="entry name" value="P-loop containing nucleoside triphosphate hydrolases"/>
    <property type="match status" value="1"/>
</dbReference>
<dbReference type="PROSITE" id="PS00152">
    <property type="entry name" value="ATPASE_ALPHA_BETA"/>
    <property type="match status" value="1"/>
</dbReference>
<reference key="1">
    <citation type="submission" date="1997-03" db="EMBL/GenBank/DDBJ databases">
        <title>A cluster of 20 genes from Agrobacterium tumefaciens concerned with flagellar structure, assembly and motility.</title>
        <authorList>
            <person name="Deakin W.J."/>
            <person name="Parker V.E."/>
            <person name="Loake G.J."/>
            <person name="Shaw C.H."/>
        </authorList>
    </citation>
    <scope>NUCLEOTIDE SEQUENCE [GENOMIC DNA]</scope>
</reference>
<reference key="2">
    <citation type="journal article" date="2001" name="Science">
        <title>The genome of the natural genetic engineer Agrobacterium tumefaciens C58.</title>
        <authorList>
            <person name="Wood D.W."/>
            <person name="Setubal J.C."/>
            <person name="Kaul R."/>
            <person name="Monks D.E."/>
            <person name="Kitajima J.P."/>
            <person name="Okura V.K."/>
            <person name="Zhou Y."/>
            <person name="Chen L."/>
            <person name="Wood G.E."/>
            <person name="Almeida N.F. Jr."/>
            <person name="Woo L."/>
            <person name="Chen Y."/>
            <person name="Paulsen I.T."/>
            <person name="Eisen J.A."/>
            <person name="Karp P.D."/>
            <person name="Bovee D. Sr."/>
            <person name="Chapman P."/>
            <person name="Clendenning J."/>
            <person name="Deatherage G."/>
            <person name="Gillet W."/>
            <person name="Grant C."/>
            <person name="Kutyavin T."/>
            <person name="Levy R."/>
            <person name="Li M.-J."/>
            <person name="McClelland E."/>
            <person name="Palmieri A."/>
            <person name="Raymond C."/>
            <person name="Rouse G."/>
            <person name="Saenphimmachak C."/>
            <person name="Wu Z."/>
            <person name="Romero P."/>
            <person name="Gordon D."/>
            <person name="Zhang S."/>
            <person name="Yoo H."/>
            <person name="Tao Y."/>
            <person name="Biddle P."/>
            <person name="Jung M."/>
            <person name="Krespan W."/>
            <person name="Perry M."/>
            <person name="Gordon-Kamm B."/>
            <person name="Liao L."/>
            <person name="Kim S."/>
            <person name="Hendrick C."/>
            <person name="Zhao Z.-Y."/>
            <person name="Dolan M."/>
            <person name="Chumley F."/>
            <person name="Tingey S.V."/>
            <person name="Tomb J.-F."/>
            <person name="Gordon M.P."/>
            <person name="Olson M.V."/>
            <person name="Nester E.W."/>
        </authorList>
    </citation>
    <scope>NUCLEOTIDE SEQUENCE [LARGE SCALE GENOMIC DNA]</scope>
    <source>
        <strain>C58 / ATCC 33970</strain>
    </source>
</reference>
<reference key="3">
    <citation type="journal article" date="2001" name="Science">
        <title>Genome sequence of the plant pathogen and biotechnology agent Agrobacterium tumefaciens C58.</title>
        <authorList>
            <person name="Goodner B."/>
            <person name="Hinkle G."/>
            <person name="Gattung S."/>
            <person name="Miller N."/>
            <person name="Blanchard M."/>
            <person name="Qurollo B."/>
            <person name="Goldman B.S."/>
            <person name="Cao Y."/>
            <person name="Askenazi M."/>
            <person name="Halling C."/>
            <person name="Mullin L."/>
            <person name="Houmiel K."/>
            <person name="Gordon J."/>
            <person name="Vaudin M."/>
            <person name="Iartchouk O."/>
            <person name="Epp A."/>
            <person name="Liu F."/>
            <person name="Wollam C."/>
            <person name="Allinger M."/>
            <person name="Doughty D."/>
            <person name="Scott C."/>
            <person name="Lappas C."/>
            <person name="Markelz B."/>
            <person name="Flanagan C."/>
            <person name="Crowell C."/>
            <person name="Gurson J."/>
            <person name="Lomo C."/>
            <person name="Sear C."/>
            <person name="Strub G."/>
            <person name="Cielo C."/>
            <person name="Slater S."/>
        </authorList>
    </citation>
    <scope>NUCLEOTIDE SEQUENCE [LARGE SCALE GENOMIC DNA]</scope>
    <source>
        <strain>C58 / ATCC 33970</strain>
    </source>
</reference>